<reference key="1">
    <citation type="journal article" date="2010" name="J. Bacteriol.">
        <title>Complete genome sequence of Enterobacter cloacae subsp. cloacae type strain ATCC 13047.</title>
        <authorList>
            <person name="Ren Y."/>
            <person name="Ren Y."/>
            <person name="Zhou Z."/>
            <person name="Guo X."/>
            <person name="Li Y."/>
            <person name="Feng L."/>
            <person name="Wang L."/>
        </authorList>
    </citation>
    <scope>NUCLEOTIDE SEQUENCE [LARGE SCALE GENOMIC DNA]</scope>
    <source>
        <strain>ATCC 13047 / DSM 30054 / NBRC 13535 / NCTC 10005 / WDCM 00083 / NCDC 279-56</strain>
    </source>
</reference>
<accession>D5CE34</accession>
<evidence type="ECO:0000255" key="1">
    <source>
        <dbReference type="HAMAP-Rule" id="MF_00831"/>
    </source>
</evidence>
<proteinExistence type="inferred from homology"/>
<name>RUTC_ENTCC</name>
<gene>
    <name evidence="1" type="primary">rutC</name>
    <name type="ordered locus">ECL_02624</name>
</gene>
<keyword id="KW-0378">Hydrolase</keyword>
<keyword id="KW-1185">Reference proteome</keyword>
<feature type="chain" id="PRO_0000402718" description="3-aminoacrylate deaminase RutC">
    <location>
        <begin position="1"/>
        <end position="128"/>
    </location>
</feature>
<dbReference type="EC" id="3.5.-.-" evidence="1"/>
<dbReference type="EMBL" id="CP001918">
    <property type="protein sequence ID" value="ADF62167.1"/>
    <property type="molecule type" value="Genomic_DNA"/>
</dbReference>
<dbReference type="RefSeq" id="WP_013097195.1">
    <property type="nucleotide sequence ID" value="NC_014121.1"/>
</dbReference>
<dbReference type="RefSeq" id="YP_003613116.1">
    <property type="nucleotide sequence ID" value="NC_014121.1"/>
</dbReference>
<dbReference type="SMR" id="D5CE34"/>
<dbReference type="STRING" id="716541.ECL_02624"/>
<dbReference type="EnsemblBacteria" id="ADF62167">
    <property type="protein sequence ID" value="ADF62167"/>
    <property type="gene ID" value="ECL_02624"/>
</dbReference>
<dbReference type="GeneID" id="83572968"/>
<dbReference type="KEGG" id="enc:ECL_02624"/>
<dbReference type="PATRIC" id="fig|716541.4.peg.2797"/>
<dbReference type="eggNOG" id="COG0251">
    <property type="taxonomic scope" value="Bacteria"/>
</dbReference>
<dbReference type="HOGENOM" id="CLU_100715_7_3_6"/>
<dbReference type="OrthoDB" id="583118at2"/>
<dbReference type="Proteomes" id="UP000002363">
    <property type="component" value="Chromosome"/>
</dbReference>
<dbReference type="GO" id="GO:0005829">
    <property type="term" value="C:cytosol"/>
    <property type="evidence" value="ECO:0007669"/>
    <property type="project" value="TreeGrafter"/>
</dbReference>
<dbReference type="GO" id="GO:0019239">
    <property type="term" value="F:deaminase activity"/>
    <property type="evidence" value="ECO:0007669"/>
    <property type="project" value="TreeGrafter"/>
</dbReference>
<dbReference type="GO" id="GO:0019740">
    <property type="term" value="P:nitrogen utilization"/>
    <property type="evidence" value="ECO:0007669"/>
    <property type="project" value="UniProtKB-UniRule"/>
</dbReference>
<dbReference type="GO" id="GO:0006212">
    <property type="term" value="P:uracil catabolic process"/>
    <property type="evidence" value="ECO:0007669"/>
    <property type="project" value="UniProtKB-UniRule"/>
</dbReference>
<dbReference type="CDD" id="cd00448">
    <property type="entry name" value="YjgF_YER057c_UK114_family"/>
    <property type="match status" value="1"/>
</dbReference>
<dbReference type="Gene3D" id="3.30.1330.40">
    <property type="entry name" value="RutC-like"/>
    <property type="match status" value="1"/>
</dbReference>
<dbReference type="HAMAP" id="MF_00831">
    <property type="entry name" value="RutC"/>
    <property type="match status" value="1"/>
</dbReference>
<dbReference type="InterPro" id="IPR019897">
    <property type="entry name" value="RidA_CS"/>
</dbReference>
<dbReference type="InterPro" id="IPR019898">
    <property type="entry name" value="RutC"/>
</dbReference>
<dbReference type="InterPro" id="IPR035959">
    <property type="entry name" value="RutC-like_sf"/>
</dbReference>
<dbReference type="InterPro" id="IPR006175">
    <property type="entry name" value="YjgF/YER057c/UK114"/>
</dbReference>
<dbReference type="NCBIfam" id="TIGR03610">
    <property type="entry name" value="RutC"/>
    <property type="match status" value="1"/>
</dbReference>
<dbReference type="PANTHER" id="PTHR11803">
    <property type="entry name" value="2-IMINOBUTANOATE/2-IMINOPROPANOATE DEAMINASE RIDA"/>
    <property type="match status" value="1"/>
</dbReference>
<dbReference type="PANTHER" id="PTHR11803:SF58">
    <property type="entry name" value="PROTEIN HMF1-RELATED"/>
    <property type="match status" value="1"/>
</dbReference>
<dbReference type="Pfam" id="PF01042">
    <property type="entry name" value="Ribonuc_L-PSP"/>
    <property type="match status" value="1"/>
</dbReference>
<dbReference type="SUPFAM" id="SSF55298">
    <property type="entry name" value="YjgF-like"/>
    <property type="match status" value="1"/>
</dbReference>
<dbReference type="PROSITE" id="PS01094">
    <property type="entry name" value="UPF0076"/>
    <property type="match status" value="1"/>
</dbReference>
<comment type="function">
    <text evidence="1">Involved in pyrimidine catabolism. Catalyzes the deamination of 3-aminoacrylate to malonic semialdehyde, a reaction that can also occur spontaneously. RutC may facilitate the reaction and modulate the metabolic fitness, rather than catalyzing essential functions.</text>
</comment>
<comment type="catalytic activity">
    <reaction evidence="1">
        <text>(Z)-3-aminoacrylate + H2O + H(+) = 3-oxopropanoate + NH4(+)</text>
        <dbReference type="Rhea" id="RHEA:34947"/>
        <dbReference type="ChEBI" id="CHEBI:15377"/>
        <dbReference type="ChEBI" id="CHEBI:15378"/>
        <dbReference type="ChEBI" id="CHEBI:28938"/>
        <dbReference type="ChEBI" id="CHEBI:33190"/>
        <dbReference type="ChEBI" id="CHEBI:59894"/>
    </reaction>
</comment>
<comment type="similarity">
    <text evidence="1">Belongs to the RutC family.</text>
</comment>
<sequence length="128" mass="13839">MPKSVIIPPGTSTPIAPFVPGTLADGVVYVSGTLPFDKDNNVVFINDPKAQTRHVLETIKTVIETAGGTMEDVTFNSIFITDWKNYAAINEIYAEFFPGDKPARFCIQCGLVKPDALVEIATVAHIGK</sequence>
<organism>
    <name type="scientific">Enterobacter cloacae subsp. cloacae (strain ATCC 13047 / DSM 30054 / NBRC 13535 / NCTC 10005 / WDCM 00083 / NCDC 279-56)</name>
    <dbReference type="NCBI Taxonomy" id="716541"/>
    <lineage>
        <taxon>Bacteria</taxon>
        <taxon>Pseudomonadati</taxon>
        <taxon>Pseudomonadota</taxon>
        <taxon>Gammaproteobacteria</taxon>
        <taxon>Enterobacterales</taxon>
        <taxon>Enterobacteriaceae</taxon>
        <taxon>Enterobacter</taxon>
        <taxon>Enterobacter cloacae complex</taxon>
    </lineage>
</organism>
<protein>
    <recommendedName>
        <fullName evidence="1">3-aminoacrylate deaminase RutC</fullName>
        <shortName evidence="1">3-AA deaminase</shortName>
        <ecNumber evidence="1">3.5.-.-</ecNumber>
    </recommendedName>
</protein>